<evidence type="ECO:0000250" key="1">
    <source>
        <dbReference type="UniProtKB" id="Q91ZQ0"/>
    </source>
</evidence>
<evidence type="ECO:0000250" key="2">
    <source>
        <dbReference type="UniProtKB" id="Q96GC9"/>
    </source>
</evidence>
<evidence type="ECO:0000255" key="3"/>
<evidence type="ECO:0000256" key="4">
    <source>
        <dbReference type="SAM" id="MobiDB-lite"/>
    </source>
</evidence>
<evidence type="ECO:0000269" key="5">
    <source>
    </source>
</evidence>
<evidence type="ECO:0000269" key="6">
    <source>
    </source>
</evidence>
<evidence type="ECO:0000269" key="7">
    <source>
    </source>
</evidence>
<evidence type="ECO:0000303" key="8">
    <source>
    </source>
</evidence>
<evidence type="ECO:0000303" key="9">
    <source ref="2"/>
</evidence>
<evidence type="ECO:0000305" key="10"/>
<evidence type="ECO:0000312" key="11">
    <source>
        <dbReference type="MGI" id="MGI:1923159"/>
    </source>
</evidence>
<proteinExistence type="evidence at protein level"/>
<reference key="1">
    <citation type="submission" date="2000-08" db="EMBL/GenBank/DDBJ databases">
        <title>A novel lipopolysaccharide-inducible gene (#25).</title>
        <authorList>
            <person name="Yamazaki S."/>
            <person name="Muta T."/>
            <person name="Takeshige K."/>
        </authorList>
    </citation>
    <scope>NUCLEOTIDE SEQUENCE [MRNA]</scope>
    <source>
        <strain>C57BL/6J</strain>
        <tissue>Spleen</tissue>
    </source>
</reference>
<reference key="2">
    <citation type="submission" date="2001-12" db="EMBL/GenBank/DDBJ databases">
        <title>NF-E2 induceble novel gene.</title>
        <authorList>
            <person name="Nagata Y."/>
            <person name="Oda M."/>
            <person name="Haruta H."/>
            <person name="Todokoro K."/>
        </authorList>
    </citation>
    <scope>NUCLEOTIDE SEQUENCE [MRNA]</scope>
</reference>
<reference key="3">
    <citation type="journal article" date="2005" name="Science">
        <title>The transcriptional landscape of the mammalian genome.</title>
        <authorList>
            <person name="Carninci P."/>
            <person name="Kasukawa T."/>
            <person name="Katayama S."/>
            <person name="Gough J."/>
            <person name="Frith M.C."/>
            <person name="Maeda N."/>
            <person name="Oyama R."/>
            <person name="Ravasi T."/>
            <person name="Lenhard B."/>
            <person name="Wells C."/>
            <person name="Kodzius R."/>
            <person name="Shimokawa K."/>
            <person name="Bajic V.B."/>
            <person name="Brenner S.E."/>
            <person name="Batalov S."/>
            <person name="Forrest A.R."/>
            <person name="Zavolan M."/>
            <person name="Davis M.J."/>
            <person name="Wilming L.G."/>
            <person name="Aidinis V."/>
            <person name="Allen J.E."/>
            <person name="Ambesi-Impiombato A."/>
            <person name="Apweiler R."/>
            <person name="Aturaliya R.N."/>
            <person name="Bailey T.L."/>
            <person name="Bansal M."/>
            <person name="Baxter L."/>
            <person name="Beisel K.W."/>
            <person name="Bersano T."/>
            <person name="Bono H."/>
            <person name="Chalk A.M."/>
            <person name="Chiu K.P."/>
            <person name="Choudhary V."/>
            <person name="Christoffels A."/>
            <person name="Clutterbuck D.R."/>
            <person name="Crowe M.L."/>
            <person name="Dalla E."/>
            <person name="Dalrymple B.P."/>
            <person name="de Bono B."/>
            <person name="Della Gatta G."/>
            <person name="di Bernardo D."/>
            <person name="Down T."/>
            <person name="Engstrom P."/>
            <person name="Fagiolini M."/>
            <person name="Faulkner G."/>
            <person name="Fletcher C.F."/>
            <person name="Fukushima T."/>
            <person name="Furuno M."/>
            <person name="Futaki S."/>
            <person name="Gariboldi M."/>
            <person name="Georgii-Hemming P."/>
            <person name="Gingeras T.R."/>
            <person name="Gojobori T."/>
            <person name="Green R.E."/>
            <person name="Gustincich S."/>
            <person name="Harbers M."/>
            <person name="Hayashi Y."/>
            <person name="Hensch T.K."/>
            <person name="Hirokawa N."/>
            <person name="Hill D."/>
            <person name="Huminiecki L."/>
            <person name="Iacono M."/>
            <person name="Ikeo K."/>
            <person name="Iwama A."/>
            <person name="Ishikawa T."/>
            <person name="Jakt M."/>
            <person name="Kanapin A."/>
            <person name="Katoh M."/>
            <person name="Kawasawa Y."/>
            <person name="Kelso J."/>
            <person name="Kitamura H."/>
            <person name="Kitano H."/>
            <person name="Kollias G."/>
            <person name="Krishnan S.P."/>
            <person name="Kruger A."/>
            <person name="Kummerfeld S.K."/>
            <person name="Kurochkin I.V."/>
            <person name="Lareau L.F."/>
            <person name="Lazarevic D."/>
            <person name="Lipovich L."/>
            <person name="Liu J."/>
            <person name="Liuni S."/>
            <person name="McWilliam S."/>
            <person name="Madan Babu M."/>
            <person name="Madera M."/>
            <person name="Marchionni L."/>
            <person name="Matsuda H."/>
            <person name="Matsuzawa S."/>
            <person name="Miki H."/>
            <person name="Mignone F."/>
            <person name="Miyake S."/>
            <person name="Morris K."/>
            <person name="Mottagui-Tabar S."/>
            <person name="Mulder N."/>
            <person name="Nakano N."/>
            <person name="Nakauchi H."/>
            <person name="Ng P."/>
            <person name="Nilsson R."/>
            <person name="Nishiguchi S."/>
            <person name="Nishikawa S."/>
            <person name="Nori F."/>
            <person name="Ohara O."/>
            <person name="Okazaki Y."/>
            <person name="Orlando V."/>
            <person name="Pang K.C."/>
            <person name="Pavan W.J."/>
            <person name="Pavesi G."/>
            <person name="Pesole G."/>
            <person name="Petrovsky N."/>
            <person name="Piazza S."/>
            <person name="Reed J."/>
            <person name="Reid J.F."/>
            <person name="Ring B.Z."/>
            <person name="Ringwald M."/>
            <person name="Rost B."/>
            <person name="Ruan Y."/>
            <person name="Salzberg S.L."/>
            <person name="Sandelin A."/>
            <person name="Schneider C."/>
            <person name="Schoenbach C."/>
            <person name="Sekiguchi K."/>
            <person name="Semple C.A."/>
            <person name="Seno S."/>
            <person name="Sessa L."/>
            <person name="Sheng Y."/>
            <person name="Shibata Y."/>
            <person name="Shimada H."/>
            <person name="Shimada K."/>
            <person name="Silva D."/>
            <person name="Sinclair B."/>
            <person name="Sperling S."/>
            <person name="Stupka E."/>
            <person name="Sugiura K."/>
            <person name="Sultana R."/>
            <person name="Takenaka Y."/>
            <person name="Taki K."/>
            <person name="Tammoja K."/>
            <person name="Tan S.L."/>
            <person name="Tang S."/>
            <person name="Taylor M.S."/>
            <person name="Tegner J."/>
            <person name="Teichmann S.A."/>
            <person name="Ueda H.R."/>
            <person name="van Nimwegen E."/>
            <person name="Verardo R."/>
            <person name="Wei C.L."/>
            <person name="Yagi K."/>
            <person name="Yamanishi H."/>
            <person name="Zabarovsky E."/>
            <person name="Zhu S."/>
            <person name="Zimmer A."/>
            <person name="Hide W."/>
            <person name="Bult C."/>
            <person name="Grimmond S.M."/>
            <person name="Teasdale R.D."/>
            <person name="Liu E.T."/>
            <person name="Brusic V."/>
            <person name="Quackenbush J."/>
            <person name="Wahlestedt C."/>
            <person name="Mattick J.S."/>
            <person name="Hume D.A."/>
            <person name="Kai C."/>
            <person name="Sasaki D."/>
            <person name="Tomaru Y."/>
            <person name="Fukuda S."/>
            <person name="Kanamori-Katayama M."/>
            <person name="Suzuki M."/>
            <person name="Aoki J."/>
            <person name="Arakawa T."/>
            <person name="Iida J."/>
            <person name="Imamura K."/>
            <person name="Itoh M."/>
            <person name="Kato T."/>
            <person name="Kawaji H."/>
            <person name="Kawagashira N."/>
            <person name="Kawashima T."/>
            <person name="Kojima M."/>
            <person name="Kondo S."/>
            <person name="Konno H."/>
            <person name="Nakano K."/>
            <person name="Ninomiya N."/>
            <person name="Nishio T."/>
            <person name="Okada M."/>
            <person name="Plessy C."/>
            <person name="Shibata K."/>
            <person name="Shiraki T."/>
            <person name="Suzuki S."/>
            <person name="Tagami M."/>
            <person name="Waki K."/>
            <person name="Watahiki A."/>
            <person name="Okamura-Oho Y."/>
            <person name="Suzuki H."/>
            <person name="Kawai J."/>
            <person name="Hayashizaki Y."/>
        </authorList>
    </citation>
    <scope>NUCLEOTIDE SEQUENCE [LARGE SCALE MRNA]</scope>
    <source>
        <strain>C57BL/6J</strain>
        <tissue>Cerebellum</tissue>
    </source>
</reference>
<reference key="4">
    <citation type="journal article" date="2009" name="PLoS Biol.">
        <title>Lineage-specific biology revealed by a finished genome assembly of the mouse.</title>
        <authorList>
            <person name="Church D.M."/>
            <person name="Goodstadt L."/>
            <person name="Hillier L.W."/>
            <person name="Zody M.C."/>
            <person name="Goldstein S."/>
            <person name="She X."/>
            <person name="Bult C.J."/>
            <person name="Agarwala R."/>
            <person name="Cherry J.L."/>
            <person name="DiCuccio M."/>
            <person name="Hlavina W."/>
            <person name="Kapustin Y."/>
            <person name="Meric P."/>
            <person name="Maglott D."/>
            <person name="Birtle Z."/>
            <person name="Marques A.C."/>
            <person name="Graves T."/>
            <person name="Zhou S."/>
            <person name="Teague B."/>
            <person name="Potamousis K."/>
            <person name="Churas C."/>
            <person name="Place M."/>
            <person name="Herschleb J."/>
            <person name="Runnheim R."/>
            <person name="Forrest D."/>
            <person name="Amos-Landgraf J."/>
            <person name="Schwartz D.C."/>
            <person name="Cheng Z."/>
            <person name="Lindblad-Toh K."/>
            <person name="Eichler E.E."/>
            <person name="Ponting C.P."/>
        </authorList>
    </citation>
    <scope>NUCLEOTIDE SEQUENCE [LARGE SCALE GENOMIC DNA]</scope>
    <source>
        <strain>C57BL/6J</strain>
    </source>
</reference>
<reference key="5">
    <citation type="journal article" date="2004" name="Genome Res.">
        <title>The status, quality, and expansion of the NIH full-length cDNA project: the Mammalian Gene Collection (MGC).</title>
        <authorList>
            <consortium name="The MGC Project Team"/>
        </authorList>
    </citation>
    <scope>NUCLEOTIDE SEQUENCE [LARGE SCALE MRNA]</scope>
    <source>
        <strain>Czech II</strain>
        <tissue>Mammary tumor</tissue>
    </source>
</reference>
<reference key="6">
    <citation type="journal article" date="2007" name="J. Biol. Chem.">
        <title>The pancreatitis-induced vacuole membrane protein 1 triggers autophagy in mammalian cells.</title>
        <authorList>
            <person name="Ropolo A."/>
            <person name="Grasso D."/>
            <person name="Pardo R."/>
            <person name="Sacchetti M.L."/>
            <person name="Archange C."/>
            <person name="Lo Re A."/>
            <person name="Seux M."/>
            <person name="Nowak J."/>
            <person name="Gonzalez C.D."/>
            <person name="Iovanna J.L."/>
            <person name="Vaccaro M.I."/>
        </authorList>
    </citation>
    <scope>FUNCTION</scope>
</reference>
<reference key="7">
    <citation type="journal article" date="2010" name="Cell">
        <title>A tissue-specific atlas of mouse protein phosphorylation and expression.</title>
        <authorList>
            <person name="Huttlin E.L."/>
            <person name="Jedrychowski M.P."/>
            <person name="Elias J.E."/>
            <person name="Goswami T."/>
            <person name="Rad R."/>
            <person name="Beausoleil S.A."/>
            <person name="Villen J."/>
            <person name="Haas W."/>
            <person name="Sowa M.E."/>
            <person name="Gygi S.P."/>
        </authorList>
    </citation>
    <scope>IDENTIFICATION BY MASS SPECTROMETRY [LARGE SCALE ANALYSIS]</scope>
    <source>
        <tissue>Brain</tissue>
        <tissue>Brown adipose tissue</tissue>
        <tissue>Heart</tissue>
        <tissue>Kidney</tissue>
        <tissue>Liver</tissue>
        <tissue>Lung</tissue>
        <tissue>Pancreas</tissue>
        <tissue>Spleen</tissue>
        <tissue>Testis</tissue>
    </source>
</reference>
<reference key="8">
    <citation type="journal article" date="2017" name="Mol. Cell">
        <title>The ER-Localized Transmembrane Protein EPG-3/VMP1 Regulates SERCA Activity to Control ER-Isolation Membrane Contacts for Autophagosome Formation.</title>
        <authorList>
            <person name="Zhao Y.G."/>
            <person name="Chen Y."/>
            <person name="Miao G."/>
            <person name="Zhao H."/>
            <person name="Qu W."/>
            <person name="Li D."/>
            <person name="Wang Z."/>
            <person name="Liu N."/>
            <person name="Li L."/>
            <person name="Chen S."/>
            <person name="Liu P."/>
            <person name="Feng D."/>
            <person name="Zhang H."/>
        </authorList>
    </citation>
    <scope>FUNCTION</scope>
</reference>
<reference key="9">
    <citation type="journal article" date="2019" name="Elife">
        <title>A critical role of VMP1 in lipoprotein secretion.</title>
        <authorList>
            <person name="Morishita H."/>
            <person name="Zhao Y.G."/>
            <person name="Tamura N."/>
            <person name="Nishimura T."/>
            <person name="Kanda Y."/>
            <person name="Sakamaki Y."/>
            <person name="Okazaki M."/>
            <person name="Li D."/>
            <person name="Mizushima N."/>
        </authorList>
    </citation>
    <scope>FUNCTION</scope>
    <scope>DISRUPTION PHENOTYPE</scope>
</reference>
<feature type="initiator methionine" description="Removed" evidence="2">
    <location>
        <position position="1"/>
    </location>
</feature>
<feature type="chain" id="PRO_0000284547" description="Vacuole membrane protein 1">
    <location>
        <begin position="2"/>
        <end position="406"/>
    </location>
</feature>
<feature type="topological domain" description="Cytoplasmic" evidence="3">
    <location>
        <begin position="2"/>
        <end position="77"/>
    </location>
</feature>
<feature type="transmembrane region" description="Helical" evidence="3">
    <location>
        <begin position="78"/>
        <end position="98"/>
    </location>
</feature>
<feature type="topological domain" description="Extracellular" evidence="3">
    <location>
        <begin position="99"/>
        <end position="109"/>
    </location>
</feature>
<feature type="transmembrane region" description="Helical" evidence="3">
    <location>
        <begin position="110"/>
        <end position="130"/>
    </location>
</feature>
<feature type="topological domain" description="Cytoplasmic" evidence="3">
    <location>
        <begin position="131"/>
        <end position="250"/>
    </location>
</feature>
<feature type="transmembrane region" description="Helical" evidence="3">
    <location>
        <begin position="251"/>
        <end position="271"/>
    </location>
</feature>
<feature type="topological domain" description="Extracellular" evidence="3">
    <location>
        <begin position="272"/>
        <end position="273"/>
    </location>
</feature>
<feature type="transmembrane region" description="Helical" evidence="3">
    <location>
        <begin position="274"/>
        <end position="294"/>
    </location>
</feature>
<feature type="topological domain" description="Cytoplasmic" evidence="3">
    <location>
        <begin position="295"/>
        <end position="305"/>
    </location>
</feature>
<feature type="transmembrane region" description="Helical" evidence="3">
    <location>
        <begin position="306"/>
        <end position="326"/>
    </location>
</feature>
<feature type="topological domain" description="Extracellular" evidence="3">
    <location>
        <begin position="327"/>
        <end position="363"/>
    </location>
</feature>
<feature type="transmembrane region" description="Helical" evidence="3">
    <location>
        <begin position="364"/>
        <end position="384"/>
    </location>
</feature>
<feature type="topological domain" description="Cytoplasmic" evidence="3">
    <location>
        <begin position="385"/>
        <end position="406"/>
    </location>
</feature>
<feature type="region of interest" description="Disordered" evidence="4">
    <location>
        <begin position="1"/>
        <end position="37"/>
    </location>
</feature>
<feature type="region of interest" description="VTT domain" evidence="2">
    <location>
        <begin position="173"/>
        <end position="316"/>
    </location>
</feature>
<feature type="compositionally biased region" description="Basic and acidic residues" evidence="4">
    <location>
        <begin position="1"/>
        <end position="20"/>
    </location>
</feature>
<feature type="modified residue" description="N-acetylalanine" evidence="2">
    <location>
        <position position="2"/>
    </location>
</feature>
<feature type="sequence conflict" description="In Ref. 2; BAD06453 and 5; AAH04013." evidence="10" ref="2 5">
    <original>I</original>
    <variation>V</variation>
    <location>
        <position position="13"/>
    </location>
</feature>
<feature type="sequence conflict" description="In Ref. 3; BAE35109." evidence="10" ref="3">
    <original>E</original>
    <variation>K</variation>
    <location>
        <position position="228"/>
    </location>
</feature>
<feature type="sequence conflict" description="In Ref. 1; BAF47367." evidence="10" ref="1">
    <original>Q</original>
    <variation>H</variation>
    <location>
        <position position="347"/>
    </location>
</feature>
<accession>Q99KU0</accession>
<accession>A2V655</accession>
<accession>Q3TX07</accession>
<accession>Q8BHD3</accession>
<organism>
    <name type="scientific">Mus musculus</name>
    <name type="common">Mouse</name>
    <dbReference type="NCBI Taxonomy" id="10090"/>
    <lineage>
        <taxon>Eukaryota</taxon>
        <taxon>Metazoa</taxon>
        <taxon>Chordata</taxon>
        <taxon>Craniata</taxon>
        <taxon>Vertebrata</taxon>
        <taxon>Euteleostomi</taxon>
        <taxon>Mammalia</taxon>
        <taxon>Eutheria</taxon>
        <taxon>Euarchontoglires</taxon>
        <taxon>Glires</taxon>
        <taxon>Rodentia</taxon>
        <taxon>Myomorpha</taxon>
        <taxon>Muroidea</taxon>
        <taxon>Muridae</taxon>
        <taxon>Murinae</taxon>
        <taxon>Mus</taxon>
        <taxon>Mus</taxon>
    </lineage>
</organism>
<protein>
    <recommendedName>
        <fullName evidence="10">Vacuole membrane protein 1</fullName>
    </recommendedName>
    <alternativeName>
        <fullName evidence="9">NF-E2-inducible protein 2</fullName>
        <shortName evidence="9">Protein ni-2</shortName>
    </alternativeName>
</protein>
<sequence length="406" mass="45960">MAENGKNCDQRRIAMSKDQHNGSLTDPSSVHEKKRRDREERQNIVLWRQPLITLQYFSLETLVVLKEWTSKLWHRQSIVVSFLLLLAALVATYYVEGAHQQYVQRIEKQFLLYAYWIGLGILSSVGLGTGLHTFLLYLGPHIASVTLAAYECNSVNFPEPPYPDQIICPEEEGAEGAISLWSIISKVRIEACMWGIGTAIGELPPYFMARAARLSGAEPDDEEYQEFEEMLEHAEAAQDFASRAKLAVQKLVQKVGFFGILACASIPNPLFDLAGITCGHFLVPFWTFFGATLIGKAIIKMHIQKIFVIVTFSKHIVEQMVTFIGAVPGIGPSLQKPFQEYLEAQRQKLHHRSEAGTPQGENWLSWMFEKLVVAMVCYFVLSIINSMAQNYAKRIQQRLNSEEKTK</sequence>
<gene>
    <name evidence="8 11" type="primary">Vmp1</name>
</gene>
<comment type="function">
    <text evidence="1 2 5 6 7">Phospholipid scramblase involved in lipid homeostasis and membrane dynamics processes (By similarity). Has phospholipid scramblase activity toward cholesterol and phosphatidylserine, as well as phosphatidylethanolamine and phosphatidylcholine (By similarity). Required for autophagosome formation: participates in early stages of autophagosome biogenesis at the endoplasmic reticulum (ER) membrane by reequilibrating the leaflets of the ER as lipids are extracted by ATG2 (ATG2A or ATG2B) to mediate autophagosome assembly (PubMed:17940279, PubMed:28890335). Regulates ATP2A2 activity to control ER-isolation membrane contacts for autophagosome formation (By similarity). In addition to autophagy, involved in other processes in which phospholipid scramblase activity is required (By similarity). Modulates ER contacts with lipid droplets, mitochondria and endosomes (By similarity). Plays an essential role in formation of cell junctions (PubMed:31526472). Upon stress such as bacterial and viral infection, promotes formation of cytoplasmic vacuoles followed by cell death (By similarity). Involved in the cytoplasmic vacuolization of acinar cells during the early stage of acute pancreatitis (By similarity).</text>
</comment>
<comment type="catalytic activity">
    <reaction evidence="2">
        <text>a 1,2-diacyl-sn-glycero-3-phospho-L-serine(in) = a 1,2-diacyl-sn-glycero-3-phospho-L-serine(out)</text>
        <dbReference type="Rhea" id="RHEA:38663"/>
        <dbReference type="ChEBI" id="CHEBI:57262"/>
    </reaction>
</comment>
<comment type="catalytic activity">
    <reaction evidence="2">
        <text>cholesterol(in) = cholesterol(out)</text>
        <dbReference type="Rhea" id="RHEA:39747"/>
        <dbReference type="ChEBI" id="CHEBI:16113"/>
    </reaction>
</comment>
<comment type="catalytic activity">
    <reaction evidence="2">
        <text>a 1,2-diacyl-sn-glycero-3-phosphocholine(in) = a 1,2-diacyl-sn-glycero-3-phosphocholine(out)</text>
        <dbReference type="Rhea" id="RHEA:38571"/>
        <dbReference type="ChEBI" id="CHEBI:57643"/>
    </reaction>
</comment>
<comment type="catalytic activity">
    <reaction evidence="2">
        <text>a 1,2-diacyl-sn-glycero-3-phosphoethanolamine(in) = a 1,2-diacyl-sn-glycero-3-phosphoethanolamine(out)</text>
        <dbReference type="Rhea" id="RHEA:38895"/>
        <dbReference type="ChEBI" id="CHEBI:64612"/>
    </reaction>
</comment>
<comment type="subunit">
    <text evidence="1 2">Interacts with BECN1 (By similarity). Interacts with TJP1. Interacts with TP53INP2. Interacts with TMEM41B. Interacts with ATP2A2, PLN and SLN; competes with PLN and SLN to prevent them from forming an inhibitory complex with ATP2A2. Interacts with ATG2A (By similarity).</text>
</comment>
<comment type="subcellular location">
    <subcellularLocation>
        <location evidence="1">Endoplasmic reticulum-Golgi intermediate compartment membrane</location>
        <topology evidence="3">Multi-pass membrane protein</topology>
    </subcellularLocation>
    <subcellularLocation>
        <location evidence="2">Cell membrane</location>
        <topology evidence="3">Multi-pass membrane protein</topology>
    </subcellularLocation>
    <subcellularLocation>
        <location evidence="1">Vacuole membrane</location>
        <topology evidence="3">Multi-pass membrane protein</topology>
    </subcellularLocation>
    <subcellularLocation>
        <location evidence="2">Endoplasmic reticulum membrane</location>
        <topology evidence="3">Multi-pass membrane protein</topology>
    </subcellularLocation>
</comment>
<comment type="domain">
    <text evidence="2">The VTT domain was previously called the SNARE-assoc domain. As there is no evidence that this domain associates with SNARE proteins, it was renamed as VMP1, TMEM41, and TVP38 (VTT) domain.</text>
</comment>
<comment type="disruption phenotype">
    <text evidence="7">Mutants show early embryonic lethality with lipid accumulation in the visceral endoderm (PubMed:31526472). Intestinal epithelial cell-specific knockout show accumulation of lipids in intestinal epithelial cells (PubMed:31526472).</text>
</comment>
<comment type="similarity">
    <text evidence="10">Belongs to the VMP1 family.</text>
</comment>
<keyword id="KW-0007">Acetylation</keyword>
<keyword id="KW-0072">Autophagy</keyword>
<keyword id="KW-0130">Cell adhesion</keyword>
<keyword id="KW-1003">Cell membrane</keyword>
<keyword id="KW-0256">Endoplasmic reticulum</keyword>
<keyword id="KW-0445">Lipid transport</keyword>
<keyword id="KW-0472">Membrane</keyword>
<keyword id="KW-1185">Reference proteome</keyword>
<keyword id="KW-0812">Transmembrane</keyword>
<keyword id="KW-1133">Transmembrane helix</keyword>
<keyword id="KW-0813">Transport</keyword>
<keyword id="KW-0926">Vacuole</keyword>
<dbReference type="EMBL" id="AB047550">
    <property type="protein sequence ID" value="BAF47367.1"/>
    <property type="molecule type" value="mRNA"/>
</dbReference>
<dbReference type="EMBL" id="AB076609">
    <property type="protein sequence ID" value="BAD06453.1"/>
    <property type="molecule type" value="mRNA"/>
</dbReference>
<dbReference type="EMBL" id="AK043091">
    <property type="protein sequence ID" value="BAC31456.1"/>
    <property type="molecule type" value="mRNA"/>
</dbReference>
<dbReference type="EMBL" id="AK077443">
    <property type="protein sequence ID" value="BAC36803.1"/>
    <property type="molecule type" value="mRNA"/>
</dbReference>
<dbReference type="EMBL" id="AK159468">
    <property type="protein sequence ID" value="BAE35109.1"/>
    <property type="molecule type" value="mRNA"/>
</dbReference>
<dbReference type="EMBL" id="AL592222">
    <property type="status" value="NOT_ANNOTATED_CDS"/>
    <property type="molecule type" value="Genomic_DNA"/>
</dbReference>
<dbReference type="EMBL" id="AL604063">
    <property type="status" value="NOT_ANNOTATED_CDS"/>
    <property type="molecule type" value="Genomic_DNA"/>
</dbReference>
<dbReference type="EMBL" id="BC004013">
    <property type="protein sequence ID" value="AAH04013.1"/>
    <property type="molecule type" value="mRNA"/>
</dbReference>
<dbReference type="CCDS" id="CCDS25203.1"/>
<dbReference type="RefSeq" id="NP_001343460.1">
    <property type="nucleotide sequence ID" value="NM_001356531.3"/>
</dbReference>
<dbReference type="RefSeq" id="NP_001365969.1">
    <property type="nucleotide sequence ID" value="NM_001379040.1"/>
</dbReference>
<dbReference type="RefSeq" id="NP_083754.2">
    <property type="nucleotide sequence ID" value="NM_029478.3"/>
</dbReference>
<dbReference type="RefSeq" id="XP_006534466.1">
    <property type="nucleotide sequence ID" value="XM_006534403.3"/>
</dbReference>
<dbReference type="BioGRID" id="217838">
    <property type="interactions" value="1"/>
</dbReference>
<dbReference type="FunCoup" id="Q99KU0">
    <property type="interactions" value="2228"/>
</dbReference>
<dbReference type="STRING" id="10090.ENSMUSP00000018315"/>
<dbReference type="iPTMnet" id="Q99KU0"/>
<dbReference type="PhosphoSitePlus" id="Q99KU0"/>
<dbReference type="SwissPalm" id="Q99KU0"/>
<dbReference type="PaxDb" id="10090-ENSMUSP00000018315"/>
<dbReference type="PeptideAtlas" id="Q99KU0"/>
<dbReference type="ProteomicsDB" id="275180"/>
<dbReference type="Pumba" id="Q99KU0"/>
<dbReference type="TopDownProteomics" id="Q99KU0"/>
<dbReference type="Antibodypedia" id="31116">
    <property type="antibodies" value="255 antibodies from 27 providers"/>
</dbReference>
<dbReference type="DNASU" id="75909"/>
<dbReference type="Ensembl" id="ENSMUST00000018315.10">
    <property type="protein sequence ID" value="ENSMUSP00000018315.4"/>
    <property type="gene ID" value="ENSMUSG00000018171.10"/>
</dbReference>
<dbReference type="GeneID" id="75909"/>
<dbReference type="KEGG" id="mmu:75909"/>
<dbReference type="UCSC" id="uc007ksv.1">
    <property type="organism name" value="mouse"/>
</dbReference>
<dbReference type="AGR" id="MGI:1923159"/>
<dbReference type="CTD" id="81671"/>
<dbReference type="MGI" id="MGI:1923159">
    <property type="gene designation" value="Vmp1"/>
</dbReference>
<dbReference type="VEuPathDB" id="HostDB:ENSMUSG00000018171"/>
<dbReference type="eggNOG" id="KOG1109">
    <property type="taxonomic scope" value="Eukaryota"/>
</dbReference>
<dbReference type="GeneTree" id="ENSGT00390000007230"/>
<dbReference type="HOGENOM" id="CLU_033298_0_1_1"/>
<dbReference type="InParanoid" id="Q99KU0"/>
<dbReference type="OMA" id="EEPYDKR"/>
<dbReference type="OrthoDB" id="2016540at2759"/>
<dbReference type="PhylomeDB" id="Q99KU0"/>
<dbReference type="TreeFam" id="TF313699"/>
<dbReference type="BioGRID-ORCS" id="75909">
    <property type="hits" value="26 hits in 80 CRISPR screens"/>
</dbReference>
<dbReference type="ChiTaRS" id="Vmp1">
    <property type="organism name" value="mouse"/>
</dbReference>
<dbReference type="PRO" id="PR:Q99KU0"/>
<dbReference type="Proteomes" id="UP000000589">
    <property type="component" value="Chromosome 11"/>
</dbReference>
<dbReference type="RNAct" id="Q99KU0">
    <property type="molecule type" value="protein"/>
</dbReference>
<dbReference type="Bgee" id="ENSMUSG00000018171">
    <property type="expression patterns" value="Expressed in placenta labyrinth and 263 other cell types or tissues"/>
</dbReference>
<dbReference type="ExpressionAtlas" id="Q99KU0">
    <property type="expression patterns" value="baseline and differential"/>
</dbReference>
<dbReference type="GO" id="GO:0000421">
    <property type="term" value="C:autophagosome membrane"/>
    <property type="evidence" value="ECO:0000250"/>
    <property type="project" value="UniProtKB"/>
</dbReference>
<dbReference type="GO" id="GO:0005783">
    <property type="term" value="C:endoplasmic reticulum"/>
    <property type="evidence" value="ECO:0000250"/>
    <property type="project" value="UniProtKB"/>
</dbReference>
<dbReference type="GO" id="GO:0005789">
    <property type="term" value="C:endoplasmic reticulum membrane"/>
    <property type="evidence" value="ECO:0000250"/>
    <property type="project" value="UniProtKB"/>
</dbReference>
<dbReference type="GO" id="GO:0033116">
    <property type="term" value="C:endoplasmic reticulum-Golgi intermediate compartment membrane"/>
    <property type="evidence" value="ECO:0007669"/>
    <property type="project" value="UniProtKB-SubCell"/>
</dbReference>
<dbReference type="GO" id="GO:0005730">
    <property type="term" value="C:nucleolus"/>
    <property type="evidence" value="ECO:0007669"/>
    <property type="project" value="Ensembl"/>
</dbReference>
<dbReference type="GO" id="GO:0000407">
    <property type="term" value="C:phagophore assembly site"/>
    <property type="evidence" value="ECO:0000314"/>
    <property type="project" value="MGI"/>
</dbReference>
<dbReference type="GO" id="GO:0005886">
    <property type="term" value="C:plasma membrane"/>
    <property type="evidence" value="ECO:0007669"/>
    <property type="project" value="UniProtKB-SubCell"/>
</dbReference>
<dbReference type="GO" id="GO:0017128">
    <property type="term" value="F:phospholipid scramblase activity"/>
    <property type="evidence" value="ECO:0000250"/>
    <property type="project" value="UniProtKB"/>
</dbReference>
<dbReference type="GO" id="GO:0000045">
    <property type="term" value="P:autophagosome assembly"/>
    <property type="evidence" value="ECO:0000250"/>
    <property type="project" value="UniProtKB"/>
</dbReference>
<dbReference type="GO" id="GO:0016240">
    <property type="term" value="P:autophagosome membrane docking"/>
    <property type="evidence" value="ECO:0000250"/>
    <property type="project" value="UniProtKB"/>
</dbReference>
<dbReference type="GO" id="GO:0006914">
    <property type="term" value="P:autophagy"/>
    <property type="evidence" value="ECO:0000314"/>
    <property type="project" value="GO_Central"/>
</dbReference>
<dbReference type="GO" id="GO:0034329">
    <property type="term" value="P:cell junction assembly"/>
    <property type="evidence" value="ECO:0000250"/>
    <property type="project" value="UniProtKB"/>
</dbReference>
<dbReference type="GO" id="GO:0098609">
    <property type="term" value="P:cell-cell adhesion"/>
    <property type="evidence" value="ECO:0000250"/>
    <property type="project" value="UniProtKB"/>
</dbReference>
<dbReference type="GO" id="GO:0007566">
    <property type="term" value="P:embryo implantation"/>
    <property type="evidence" value="ECO:0000314"/>
    <property type="project" value="MGI"/>
</dbReference>
<dbReference type="GO" id="GO:0042953">
    <property type="term" value="P:lipoprotein transport"/>
    <property type="evidence" value="ECO:0000315"/>
    <property type="project" value="UniProtKB"/>
</dbReference>
<dbReference type="GO" id="GO:1990456">
    <property type="term" value="P:mitochondrion-endoplasmic reticulum membrane tethering"/>
    <property type="evidence" value="ECO:0000250"/>
    <property type="project" value="UniProtKB"/>
</dbReference>
<dbReference type="GO" id="GO:0140056">
    <property type="term" value="P:organelle localization by membrane tethering"/>
    <property type="evidence" value="ECO:0000250"/>
    <property type="project" value="UniProtKB"/>
</dbReference>
<dbReference type="GO" id="GO:1901896">
    <property type="term" value="P:positive regulation of ATPase-coupled calcium transmembrane transporter activity"/>
    <property type="evidence" value="ECO:0000250"/>
    <property type="project" value="UniProtKB"/>
</dbReference>
<name>VMP1_MOUSE</name>